<protein>
    <recommendedName>
        <fullName>Trans-cinnamate 4-monooxygenase</fullName>
        <ecNumber evidence="1">1.14.14.91</ecNumber>
    </recommendedName>
    <alternativeName>
        <fullName>Cinnamic acid 4-hydroxylase</fullName>
        <shortName>C4H</shortName>
        <shortName>CA4H</shortName>
    </alternativeName>
    <alternativeName>
        <fullName>Cytochrome P450 73</fullName>
    </alternativeName>
    <alternativeName>
        <fullName>Cytochrome P450C4H</fullName>
    </alternativeName>
</protein>
<feature type="chain" id="PRO_0000052247" description="Trans-cinnamate 4-monooxygenase">
    <location>
        <begin position="1"/>
        <end position="506"/>
    </location>
</feature>
<feature type="transmembrane region" description="Helical" evidence="3">
    <location>
        <begin position="3"/>
        <end position="23"/>
    </location>
</feature>
<feature type="binding site" evidence="2">
    <location>
        <begin position="213"/>
        <end position="218"/>
    </location>
    <ligand>
        <name>(E)-cinnamate</name>
        <dbReference type="ChEBI" id="CHEBI:15669"/>
    </ligand>
</feature>
<feature type="binding site" evidence="2">
    <location>
        <position position="307"/>
    </location>
    <ligand>
        <name>(E)-cinnamate</name>
        <dbReference type="ChEBI" id="CHEBI:15669"/>
    </ligand>
</feature>
<feature type="binding site" description="axial binding residue" evidence="2">
    <location>
        <position position="448"/>
    </location>
    <ligand>
        <name>heme</name>
        <dbReference type="ChEBI" id="CHEBI:30413"/>
    </ligand>
    <ligandPart>
        <name>Fe</name>
        <dbReference type="ChEBI" id="CHEBI:18248"/>
    </ligandPart>
</feature>
<evidence type="ECO:0000250" key="1">
    <source>
        <dbReference type="UniProtKB" id="Q04468"/>
    </source>
</evidence>
<evidence type="ECO:0000250" key="2">
    <source>
        <dbReference type="UniProtKB" id="Q94IP1"/>
    </source>
</evidence>
<evidence type="ECO:0000255" key="3"/>
<evidence type="ECO:0000305" key="4"/>
<keyword id="KW-0349">Heme</keyword>
<keyword id="KW-0408">Iron</keyword>
<keyword id="KW-0472">Membrane</keyword>
<keyword id="KW-0479">Metal-binding</keyword>
<keyword id="KW-0503">Monooxygenase</keyword>
<keyword id="KW-0560">Oxidoreductase</keyword>
<keyword id="KW-0812">Transmembrane</keyword>
<keyword id="KW-1133">Transmembrane helix</keyword>
<reference key="1">
    <citation type="journal article" date="1993" name="Arch. Biochem. Biophys.">
        <title>Stress responses in alfalfa (Medicago sativa L.). XVIII: molecular cloning and expression of the elicitor-inducible cinnamic acid 4-hydroxylase cytochrome P450.</title>
        <authorList>
            <person name="Fahrendorf T."/>
            <person name="Dixon R.A."/>
        </authorList>
    </citation>
    <scope>NUCLEOTIDE SEQUENCE [MRNA]</scope>
</reference>
<organism>
    <name type="scientific">Medicago sativa</name>
    <name type="common">Alfalfa</name>
    <dbReference type="NCBI Taxonomy" id="3879"/>
    <lineage>
        <taxon>Eukaryota</taxon>
        <taxon>Viridiplantae</taxon>
        <taxon>Streptophyta</taxon>
        <taxon>Embryophyta</taxon>
        <taxon>Tracheophyta</taxon>
        <taxon>Spermatophyta</taxon>
        <taxon>Magnoliopsida</taxon>
        <taxon>eudicotyledons</taxon>
        <taxon>Gunneridae</taxon>
        <taxon>Pentapetalae</taxon>
        <taxon>rosids</taxon>
        <taxon>fabids</taxon>
        <taxon>Fabales</taxon>
        <taxon>Fabaceae</taxon>
        <taxon>Papilionoideae</taxon>
        <taxon>50 kb inversion clade</taxon>
        <taxon>NPAAA clade</taxon>
        <taxon>Hologalegina</taxon>
        <taxon>IRL clade</taxon>
        <taxon>Trifolieae</taxon>
        <taxon>Medicago</taxon>
    </lineage>
</organism>
<gene>
    <name type="primary">CYP73A3</name>
</gene>
<sequence length="506" mass="58280">MDLLLLEKTLLALFIAATIAVTISKLRGKRFKLPPGPIPVPIFGYWLQVGDDLNHRNLTDYAKRFGEIFLLRMGQRNLVVVSSPELAKEVLHTQCVEFGSRTRNVVFDIFTGKGQDMVFTVYGEHWRKMRRIMTVPFFTNKVVQQYRYGWESEAESVVNDVKNNAEASVGGIVIRKRLQLMMYNIMYRIMFDRRFESEEDPLFVKLKALNGERSRLAQSFEYNYGDFIPILRPFLKGYLKVCKEVKDRRLQLFKDYFVDERKKLESTKSTTSNDGLKCAIDHILDAQKKGEINDDNVLYIVENINVAAIETTLWSIEWGIAELVNHQDIQNKVREEMDRVLGPGHQVTEPDLHKLPYLQAVIKETLRLRMAIPLLVPHMNLHDPKLNGFDIPAESKILVNAWWLPNNPAHWKKPEEFRPERFLEEESHVEANGNDFRYLPFGVGRRSCPGIILALPILGITIGRLVQNVELLPPPGQSKIDTSEKGGQFSLHILKHSTIVAKPRSF</sequence>
<dbReference type="EC" id="1.14.14.91" evidence="1"/>
<dbReference type="EMBL" id="L11046">
    <property type="status" value="NOT_ANNOTATED_CDS"/>
    <property type="molecule type" value="mRNA"/>
</dbReference>
<dbReference type="PIR" id="S36878">
    <property type="entry name" value="S36878"/>
</dbReference>
<dbReference type="SMR" id="P37114"/>
<dbReference type="UniPathway" id="UPA00825">
    <property type="reaction ID" value="UER00789"/>
</dbReference>
<dbReference type="GO" id="GO:0016020">
    <property type="term" value="C:membrane"/>
    <property type="evidence" value="ECO:0007669"/>
    <property type="project" value="UniProtKB-SubCell"/>
</dbReference>
<dbReference type="GO" id="GO:0020037">
    <property type="term" value="F:heme binding"/>
    <property type="evidence" value="ECO:0007669"/>
    <property type="project" value="InterPro"/>
</dbReference>
<dbReference type="GO" id="GO:0005506">
    <property type="term" value="F:iron ion binding"/>
    <property type="evidence" value="ECO:0007669"/>
    <property type="project" value="InterPro"/>
</dbReference>
<dbReference type="GO" id="GO:0016710">
    <property type="term" value="F:trans-cinnamate 4-monooxygenase activity"/>
    <property type="evidence" value="ECO:0007669"/>
    <property type="project" value="UniProtKB-EC"/>
</dbReference>
<dbReference type="GO" id="GO:0009808">
    <property type="term" value="P:lignin metabolic process"/>
    <property type="evidence" value="ECO:0007669"/>
    <property type="project" value="TreeGrafter"/>
</dbReference>
<dbReference type="CDD" id="cd11074">
    <property type="entry name" value="CYP73"/>
    <property type="match status" value="1"/>
</dbReference>
<dbReference type="FunFam" id="1.10.630.10:FF:000013">
    <property type="entry name" value="Trans-cinnamate 4-monooxygenase"/>
    <property type="match status" value="1"/>
</dbReference>
<dbReference type="Gene3D" id="1.10.630.10">
    <property type="entry name" value="Cytochrome P450"/>
    <property type="match status" value="1"/>
</dbReference>
<dbReference type="InterPro" id="IPR001128">
    <property type="entry name" value="Cyt_P450"/>
</dbReference>
<dbReference type="InterPro" id="IPR017972">
    <property type="entry name" value="Cyt_P450_CS"/>
</dbReference>
<dbReference type="InterPro" id="IPR002401">
    <property type="entry name" value="Cyt_P450_E_grp-I"/>
</dbReference>
<dbReference type="InterPro" id="IPR036396">
    <property type="entry name" value="Cyt_P450_sf"/>
</dbReference>
<dbReference type="PANTHER" id="PTHR47948">
    <property type="entry name" value="TRANS-CINNAMATE 4-MONOOXYGENASE"/>
    <property type="match status" value="1"/>
</dbReference>
<dbReference type="PANTHER" id="PTHR47948:SF4">
    <property type="entry name" value="TRANS-CINNAMATE 4-MONOOXYGENASE"/>
    <property type="match status" value="1"/>
</dbReference>
<dbReference type="Pfam" id="PF00067">
    <property type="entry name" value="p450"/>
    <property type="match status" value="1"/>
</dbReference>
<dbReference type="PRINTS" id="PR00463">
    <property type="entry name" value="EP450I"/>
</dbReference>
<dbReference type="PRINTS" id="PR00385">
    <property type="entry name" value="P450"/>
</dbReference>
<dbReference type="SUPFAM" id="SSF48264">
    <property type="entry name" value="Cytochrome P450"/>
    <property type="match status" value="1"/>
</dbReference>
<dbReference type="PROSITE" id="PS00086">
    <property type="entry name" value="CYTOCHROME_P450"/>
    <property type="match status" value="1"/>
</dbReference>
<comment type="function">
    <text evidence="1">Catalyzes the first oxidative step of the phenylpropanoid pathway in higher plants by transforming trans-cinnamate into p-coumarate (By similarity). The compounds formed by this pathway are essential components for lignification, pollination, and defense against ultraviolet light, predators and pathogens (By similarity).</text>
</comment>
<comment type="catalytic activity">
    <reaction evidence="1">
        <text>(E)-cinnamate + reduced [NADPH--hemoprotein reductase] + O2 = (E)-4-coumarate + oxidized [NADPH--hemoprotein reductase] + H2O + H(+)</text>
        <dbReference type="Rhea" id="RHEA:10608"/>
        <dbReference type="Rhea" id="RHEA-COMP:11964"/>
        <dbReference type="Rhea" id="RHEA-COMP:11965"/>
        <dbReference type="ChEBI" id="CHEBI:12876"/>
        <dbReference type="ChEBI" id="CHEBI:15377"/>
        <dbReference type="ChEBI" id="CHEBI:15378"/>
        <dbReference type="ChEBI" id="CHEBI:15379"/>
        <dbReference type="ChEBI" id="CHEBI:15669"/>
        <dbReference type="ChEBI" id="CHEBI:57618"/>
        <dbReference type="ChEBI" id="CHEBI:58210"/>
        <dbReference type="EC" id="1.14.14.91"/>
    </reaction>
</comment>
<comment type="cofactor">
    <cofactor evidence="2">
        <name>heme</name>
        <dbReference type="ChEBI" id="CHEBI:30413"/>
    </cofactor>
</comment>
<comment type="pathway">
    <text evidence="4">Phenylpropanoid metabolism; trans-4-coumarate biosynthesis; trans-4-coumarate from trans-cinnamate: step 1/1.</text>
</comment>
<comment type="subcellular location">
    <subcellularLocation>
        <location evidence="3">Membrane</location>
        <topology evidence="3">Single-pass membrane protein</topology>
    </subcellularLocation>
</comment>
<comment type="induction">
    <text>By fungal elicitor.</text>
</comment>
<comment type="similarity">
    <text evidence="4">Belongs to the cytochrome P450 family.</text>
</comment>
<name>TCMO_MEDSA</name>
<accession>P37114</accession>
<proteinExistence type="evidence at transcript level"/>